<feature type="signal peptide" evidence="2">
    <location>
        <begin position="1"/>
        <end position="19"/>
    </location>
</feature>
<feature type="chain" id="PRO_0000394101" description="Probable beta-glucosidase A">
    <location>
        <begin position="20"/>
        <end position="873"/>
    </location>
</feature>
<feature type="region of interest" description="Disordered" evidence="3">
    <location>
        <begin position="730"/>
        <end position="765"/>
    </location>
</feature>
<feature type="active site" evidence="1">
    <location>
        <position position="291"/>
    </location>
</feature>
<feature type="glycosylation site" description="N-linked (GlcNAc...) asparagine" evidence="2">
    <location>
        <position position="71"/>
    </location>
</feature>
<feature type="glycosylation site" description="N-linked (GlcNAc...) asparagine" evidence="2">
    <location>
        <position position="222"/>
    </location>
</feature>
<feature type="glycosylation site" description="N-linked (GlcNAc...) asparagine" evidence="2">
    <location>
        <position position="263"/>
    </location>
</feature>
<feature type="glycosylation site" description="N-linked (GlcNAc...) asparagine" evidence="2">
    <location>
        <position position="326"/>
    </location>
</feature>
<feature type="glycosylation site" description="N-linked (GlcNAc...) asparagine" evidence="2">
    <location>
        <position position="333"/>
    </location>
</feature>
<feature type="glycosylation site" description="N-linked (GlcNAc...) asparagine" evidence="2">
    <location>
        <position position="365"/>
    </location>
</feature>
<feature type="glycosylation site" description="N-linked (GlcNAc...) asparagine" evidence="2">
    <location>
        <position position="453"/>
    </location>
</feature>
<feature type="glycosylation site" description="N-linked (GlcNAc...) asparagine" evidence="2">
    <location>
        <position position="534"/>
    </location>
</feature>
<feature type="glycosylation site" description="N-linked (GlcNAc...) asparagine" evidence="2">
    <location>
        <position position="553"/>
    </location>
</feature>
<feature type="glycosylation site" description="N-linked (GlcNAc...) asparagine" evidence="2">
    <location>
        <position position="575"/>
    </location>
</feature>
<feature type="glycosylation site" description="N-linked (GlcNAc...) asparagine" evidence="2">
    <location>
        <position position="679"/>
    </location>
</feature>
<feature type="glycosylation site" description="N-linked (GlcNAc...) asparagine" evidence="2">
    <location>
        <position position="725"/>
    </location>
</feature>
<evidence type="ECO:0000250" key="1"/>
<evidence type="ECO:0000255" key="2"/>
<evidence type="ECO:0000256" key="3">
    <source>
        <dbReference type="SAM" id="MobiDB-lite"/>
    </source>
</evidence>
<evidence type="ECO:0000305" key="4"/>
<reference key="1">
    <citation type="journal article" date="2008" name="PLoS Genet.">
        <title>Genomic islands in the pathogenic filamentous fungus Aspergillus fumigatus.</title>
        <authorList>
            <person name="Fedorova N.D."/>
            <person name="Khaldi N."/>
            <person name="Joardar V.S."/>
            <person name="Maiti R."/>
            <person name="Amedeo P."/>
            <person name="Anderson M.J."/>
            <person name="Crabtree J."/>
            <person name="Silva J.C."/>
            <person name="Badger J.H."/>
            <person name="Albarraq A."/>
            <person name="Angiuoli S."/>
            <person name="Bussey H."/>
            <person name="Bowyer P."/>
            <person name="Cotty P.J."/>
            <person name="Dyer P.S."/>
            <person name="Egan A."/>
            <person name="Galens K."/>
            <person name="Fraser-Liggett C.M."/>
            <person name="Haas B.J."/>
            <person name="Inman J.M."/>
            <person name="Kent R."/>
            <person name="Lemieux S."/>
            <person name="Malavazi I."/>
            <person name="Orvis J."/>
            <person name="Roemer T."/>
            <person name="Ronning C.M."/>
            <person name="Sundaram J.P."/>
            <person name="Sutton G."/>
            <person name="Turner G."/>
            <person name="Venter J.C."/>
            <person name="White O.R."/>
            <person name="Whitty B.R."/>
            <person name="Youngman P."/>
            <person name="Wolfe K.H."/>
            <person name="Goldman G.H."/>
            <person name="Wortman J.R."/>
            <person name="Jiang B."/>
            <person name="Denning D.W."/>
            <person name="Nierman W.C."/>
        </authorList>
    </citation>
    <scope>NUCLEOTIDE SEQUENCE [LARGE SCALE GENOMIC DNA]</scope>
    <source>
        <strain>ATCC 1020 / DSM 3700 / CBS 544.65 / FGSC A1164 / JCM 1740 / NRRL 181 / WB 181</strain>
    </source>
</reference>
<sequence length="873" mass="94863">MRFGWLEVAALTAASVANAQVFDDSHGNNQELAFSPPFYPSPWADGQGEWADAHRRAVEIVSQMTLAEKVNLTTGTGWEMDRCVGQTGSVPRLGINWGLCGQDSPLGIRFSDLNSAFPAGTNVAATWDKTLAYLRGKAMGEEFNDKGVDILLGPAAGPLGKYPDGGRIWEGFSPDPALTGVLFAETIRGIQDAGVIATAKHYIMNEQEHFRQVSEAQGYGYNITETLSSNVDDKTMHELYLWPFADAVRAGVGAVMCSYNQINNSYGCQNSQTLNKLLKAELGFQGFVMSDWSAHHSGVGSALAGLDMSMPGDISFDDGLSFWGTNLTVSVLNGTVPAWRVDDMAVRIMTAYYKVGRDRLRIPPNFSSWTRDEYGWEHFAVSEGAWTKVNDFVNVQRSHSQIIREIGAASTVLLKNKGALPLTGKEVKVGVLGEDAGSNPWGANGCPDRGCDNGTLAMAWGSGTANFPYLVTPEQAIQREVISNGGNVFAVTDNGALSQMADVASQSSVSLVFVNADSGEGYINVDGNEGDRKNLTLWKNGEAVIDTVVSHCNNTIVVIHSVGPVLIDRWYDNPNVTAIIWAGLPGQESGNSLVDVLYGRVNPSAKTPFTWGKTRKSYGAPLLSEPNNGNGAPQDDFNEGVFIDYRHFDKRNETPIYEFGHGLSYTTFGYSHLRVQALNSSSSAYVPTSGETKPAPTYGEIGSAADYLYPEGLKRITKFIYPLLNSTDLEDSSDDPNYGWEDSEYIPEGARDGSPQPLLKAGGAPGGNPTLYQDLVRVSATITNTGNVAGYEVPQLYVSLGGPNEPRVVLRKFDRIFLAPGEQKVWTTTLNRRDLANWDVEAQDWVITKHPKKVHVGSSSRKLPLRAPLPRVY</sequence>
<protein>
    <recommendedName>
        <fullName>Probable beta-glucosidase A</fullName>
        <ecNumber>3.2.1.21</ecNumber>
    </recommendedName>
    <alternativeName>
        <fullName>Beta-D-glucoside glucohydrolase A</fullName>
    </alternativeName>
    <alternativeName>
        <fullName>Cellobiase A</fullName>
    </alternativeName>
    <alternativeName>
        <fullName>Gentiobiase A</fullName>
    </alternativeName>
</protein>
<dbReference type="EC" id="3.2.1.21"/>
<dbReference type="EMBL" id="DS027688">
    <property type="protein sequence ID" value="EAW23194.1"/>
    <property type="molecule type" value="Genomic_DNA"/>
</dbReference>
<dbReference type="RefSeq" id="XP_001265091.1">
    <property type="nucleotide sequence ID" value="XM_001265090.1"/>
</dbReference>
<dbReference type="SMR" id="A1D451"/>
<dbReference type="STRING" id="331117.A1D451"/>
<dbReference type="GlyCosmos" id="A1D451">
    <property type="glycosylation" value="12 sites, No reported glycans"/>
</dbReference>
<dbReference type="EnsemblFungi" id="EAW23194">
    <property type="protein sequence ID" value="EAW23194"/>
    <property type="gene ID" value="NFIA_018950"/>
</dbReference>
<dbReference type="GeneID" id="4591821"/>
<dbReference type="KEGG" id="nfi:NFIA_018950"/>
<dbReference type="VEuPathDB" id="FungiDB:NFIA_018950"/>
<dbReference type="eggNOG" id="ENOG502QR4D">
    <property type="taxonomic scope" value="Eukaryota"/>
</dbReference>
<dbReference type="HOGENOM" id="CLU_004542_2_0_1"/>
<dbReference type="OMA" id="YYPSPWA"/>
<dbReference type="OrthoDB" id="416222at2759"/>
<dbReference type="UniPathway" id="UPA00696"/>
<dbReference type="Proteomes" id="UP000006702">
    <property type="component" value="Unassembled WGS sequence"/>
</dbReference>
<dbReference type="GO" id="GO:0005576">
    <property type="term" value="C:extracellular region"/>
    <property type="evidence" value="ECO:0007669"/>
    <property type="project" value="UniProtKB-SubCell"/>
</dbReference>
<dbReference type="GO" id="GO:0008422">
    <property type="term" value="F:beta-glucosidase activity"/>
    <property type="evidence" value="ECO:0007669"/>
    <property type="project" value="UniProtKB-EC"/>
</dbReference>
<dbReference type="GO" id="GO:0030245">
    <property type="term" value="P:cellulose catabolic process"/>
    <property type="evidence" value="ECO:0007669"/>
    <property type="project" value="UniProtKB-UniPathway"/>
</dbReference>
<dbReference type="FunFam" id="2.60.40.10:FF:001391">
    <property type="entry name" value="Beta-glucosidase"/>
    <property type="match status" value="1"/>
</dbReference>
<dbReference type="FunFam" id="3.20.20.300:FF:000002">
    <property type="entry name" value="Probable beta-glucosidase"/>
    <property type="match status" value="1"/>
</dbReference>
<dbReference type="FunFam" id="3.40.50.1700:FF:000003">
    <property type="entry name" value="Probable beta-glucosidase"/>
    <property type="match status" value="1"/>
</dbReference>
<dbReference type="Gene3D" id="3.40.50.1700">
    <property type="entry name" value="Glycoside hydrolase family 3 C-terminal domain"/>
    <property type="match status" value="1"/>
</dbReference>
<dbReference type="Gene3D" id="3.20.20.300">
    <property type="entry name" value="Glycoside hydrolase, family 3, N-terminal domain"/>
    <property type="match status" value="1"/>
</dbReference>
<dbReference type="Gene3D" id="2.60.40.10">
    <property type="entry name" value="Immunoglobulins"/>
    <property type="match status" value="1"/>
</dbReference>
<dbReference type="InterPro" id="IPR050288">
    <property type="entry name" value="Cellulose_deg_GH3"/>
</dbReference>
<dbReference type="InterPro" id="IPR026891">
    <property type="entry name" value="Fn3-like"/>
</dbReference>
<dbReference type="InterPro" id="IPR019800">
    <property type="entry name" value="Glyco_hydro_3_AS"/>
</dbReference>
<dbReference type="InterPro" id="IPR002772">
    <property type="entry name" value="Glyco_hydro_3_C"/>
</dbReference>
<dbReference type="InterPro" id="IPR036881">
    <property type="entry name" value="Glyco_hydro_3_C_sf"/>
</dbReference>
<dbReference type="InterPro" id="IPR001764">
    <property type="entry name" value="Glyco_hydro_3_N"/>
</dbReference>
<dbReference type="InterPro" id="IPR036962">
    <property type="entry name" value="Glyco_hydro_3_N_sf"/>
</dbReference>
<dbReference type="InterPro" id="IPR017853">
    <property type="entry name" value="Glycoside_hydrolase_SF"/>
</dbReference>
<dbReference type="InterPro" id="IPR013783">
    <property type="entry name" value="Ig-like_fold"/>
</dbReference>
<dbReference type="PANTHER" id="PTHR42715">
    <property type="entry name" value="BETA-GLUCOSIDASE"/>
    <property type="match status" value="1"/>
</dbReference>
<dbReference type="PANTHER" id="PTHR42715:SF29">
    <property type="entry name" value="BETA-GLUCOSIDASE A-RELATED"/>
    <property type="match status" value="1"/>
</dbReference>
<dbReference type="Pfam" id="PF14310">
    <property type="entry name" value="Fn3-like"/>
    <property type="match status" value="1"/>
</dbReference>
<dbReference type="Pfam" id="PF00933">
    <property type="entry name" value="Glyco_hydro_3"/>
    <property type="match status" value="1"/>
</dbReference>
<dbReference type="Pfam" id="PF01915">
    <property type="entry name" value="Glyco_hydro_3_C"/>
    <property type="match status" value="1"/>
</dbReference>
<dbReference type="PRINTS" id="PR00133">
    <property type="entry name" value="GLHYDRLASE3"/>
</dbReference>
<dbReference type="SMART" id="SM01217">
    <property type="entry name" value="Fn3_like"/>
    <property type="match status" value="1"/>
</dbReference>
<dbReference type="SUPFAM" id="SSF51445">
    <property type="entry name" value="(Trans)glycosidases"/>
    <property type="match status" value="1"/>
</dbReference>
<dbReference type="SUPFAM" id="SSF52279">
    <property type="entry name" value="Beta-D-glucan exohydrolase, C-terminal domain"/>
    <property type="match status" value="1"/>
</dbReference>
<dbReference type="PROSITE" id="PS00775">
    <property type="entry name" value="GLYCOSYL_HYDROL_F3"/>
    <property type="match status" value="1"/>
</dbReference>
<organism>
    <name type="scientific">Neosartorya fischeri (strain ATCC 1020 / DSM 3700 / CBS 544.65 / FGSC A1164 / JCM 1740 / NRRL 181 / WB 181)</name>
    <name type="common">Aspergillus fischerianus</name>
    <dbReference type="NCBI Taxonomy" id="331117"/>
    <lineage>
        <taxon>Eukaryota</taxon>
        <taxon>Fungi</taxon>
        <taxon>Dikarya</taxon>
        <taxon>Ascomycota</taxon>
        <taxon>Pezizomycotina</taxon>
        <taxon>Eurotiomycetes</taxon>
        <taxon>Eurotiomycetidae</taxon>
        <taxon>Eurotiales</taxon>
        <taxon>Aspergillaceae</taxon>
        <taxon>Aspergillus</taxon>
        <taxon>Aspergillus subgen. Fumigati</taxon>
    </lineage>
</organism>
<proteinExistence type="inferred from homology"/>
<comment type="function">
    <text evidence="1">Beta-glucosidases are one of a number of cellulolytic enzymes involved in the degradation of cellulosic biomass. Catalyzes the last step releasing glucose from the inhibitory cellobiose (By similarity).</text>
</comment>
<comment type="catalytic activity">
    <reaction>
        <text>Hydrolysis of terminal, non-reducing beta-D-glucosyl residues with release of beta-D-glucose.</text>
        <dbReference type="EC" id="3.2.1.21"/>
    </reaction>
</comment>
<comment type="pathway">
    <text>Glycan metabolism; cellulose degradation.</text>
</comment>
<comment type="subcellular location">
    <subcellularLocation>
        <location evidence="1">Secreted</location>
    </subcellularLocation>
</comment>
<comment type="similarity">
    <text evidence="4">Belongs to the glycosyl hydrolase 3 family.</text>
</comment>
<gene>
    <name type="primary">bglA</name>
    <name type="synonym">bgl1</name>
    <name type="ORF">NFIA_018950</name>
</gene>
<accession>A1D451</accession>
<name>BGLA_NEOFI</name>
<keyword id="KW-0119">Carbohydrate metabolism</keyword>
<keyword id="KW-0136">Cellulose degradation</keyword>
<keyword id="KW-0325">Glycoprotein</keyword>
<keyword id="KW-0326">Glycosidase</keyword>
<keyword id="KW-0378">Hydrolase</keyword>
<keyword id="KW-0624">Polysaccharide degradation</keyword>
<keyword id="KW-1185">Reference proteome</keyword>
<keyword id="KW-0964">Secreted</keyword>
<keyword id="KW-0732">Signal</keyword>